<feature type="chain" id="PRO_0000109829" description="Uncharacterized HIT-like protein slr1234">
    <location>
        <begin position="1"/>
        <end position="114"/>
    </location>
</feature>
<feature type="domain" description="HIT" evidence="1">
    <location>
        <begin position="6"/>
        <end position="114"/>
    </location>
</feature>
<feature type="short sequence motif" description="Histidine triad motif">
    <location>
        <begin position="98"/>
        <end position="102"/>
    </location>
</feature>
<dbReference type="EMBL" id="BA000022">
    <property type="protein sequence ID" value="BAA17521.1"/>
    <property type="molecule type" value="Genomic_DNA"/>
</dbReference>
<dbReference type="PIR" id="S77418">
    <property type="entry name" value="S77418"/>
</dbReference>
<dbReference type="SMR" id="P73481"/>
<dbReference type="FunCoup" id="P73481">
    <property type="interactions" value="430"/>
</dbReference>
<dbReference type="STRING" id="1148.gene:10498386"/>
<dbReference type="PaxDb" id="1148-1652600"/>
<dbReference type="EnsemblBacteria" id="BAA17521">
    <property type="protein sequence ID" value="BAA17521"/>
    <property type="gene ID" value="BAA17521"/>
</dbReference>
<dbReference type="KEGG" id="syn:slr1234"/>
<dbReference type="eggNOG" id="COG0537">
    <property type="taxonomic scope" value="Bacteria"/>
</dbReference>
<dbReference type="InParanoid" id="P73481"/>
<dbReference type="PhylomeDB" id="P73481"/>
<dbReference type="Proteomes" id="UP000001425">
    <property type="component" value="Chromosome"/>
</dbReference>
<dbReference type="GO" id="GO:0005737">
    <property type="term" value="C:cytoplasm"/>
    <property type="evidence" value="ECO:0000318"/>
    <property type="project" value="GO_Central"/>
</dbReference>
<dbReference type="GO" id="GO:0016787">
    <property type="term" value="F:hydrolase activity"/>
    <property type="evidence" value="ECO:0000318"/>
    <property type="project" value="GO_Central"/>
</dbReference>
<dbReference type="CDD" id="cd01276">
    <property type="entry name" value="PKCI_related"/>
    <property type="match status" value="1"/>
</dbReference>
<dbReference type="FunFam" id="3.30.428.10:FF:000005">
    <property type="entry name" value="Histidine triad nucleotide-binding protein 1"/>
    <property type="match status" value="1"/>
</dbReference>
<dbReference type="Gene3D" id="3.30.428.10">
    <property type="entry name" value="HIT-like"/>
    <property type="match status" value="1"/>
</dbReference>
<dbReference type="InterPro" id="IPR019808">
    <property type="entry name" value="Histidine_triad_CS"/>
</dbReference>
<dbReference type="InterPro" id="IPR001310">
    <property type="entry name" value="Histidine_triad_HIT"/>
</dbReference>
<dbReference type="InterPro" id="IPR011146">
    <property type="entry name" value="HIT-like"/>
</dbReference>
<dbReference type="InterPro" id="IPR036265">
    <property type="entry name" value="HIT-like_sf"/>
</dbReference>
<dbReference type="PANTHER" id="PTHR23089">
    <property type="entry name" value="HISTIDINE TRIAD HIT PROTEIN"/>
    <property type="match status" value="1"/>
</dbReference>
<dbReference type="Pfam" id="PF01230">
    <property type="entry name" value="HIT"/>
    <property type="match status" value="1"/>
</dbReference>
<dbReference type="PRINTS" id="PR00332">
    <property type="entry name" value="HISTRIAD"/>
</dbReference>
<dbReference type="SUPFAM" id="SSF54197">
    <property type="entry name" value="HIT-like"/>
    <property type="match status" value="1"/>
</dbReference>
<dbReference type="PROSITE" id="PS00892">
    <property type="entry name" value="HIT_1"/>
    <property type="match status" value="1"/>
</dbReference>
<dbReference type="PROSITE" id="PS51084">
    <property type="entry name" value="HIT_2"/>
    <property type="match status" value="1"/>
</dbReference>
<sequence length="114" mass="12457">MAEDTIFSKIIRREIPAAIVYEDDLCLAFKDVNPQAPVHVLLIPKKPLPQLSAATPEDHALLGHLLLKAKEVAADLGIGDQFRLVINNGAEVGQTVFHLHLHILGGRPFSWPPG</sequence>
<accession>P73481</accession>
<proteinExistence type="predicted"/>
<evidence type="ECO:0000255" key="1">
    <source>
        <dbReference type="PROSITE-ProRule" id="PRU00464"/>
    </source>
</evidence>
<organism>
    <name type="scientific">Synechocystis sp. (strain ATCC 27184 / PCC 6803 / Kazusa)</name>
    <dbReference type="NCBI Taxonomy" id="1111708"/>
    <lineage>
        <taxon>Bacteria</taxon>
        <taxon>Bacillati</taxon>
        <taxon>Cyanobacteriota</taxon>
        <taxon>Cyanophyceae</taxon>
        <taxon>Synechococcales</taxon>
        <taxon>Merismopediaceae</taxon>
        <taxon>Synechocystis</taxon>
    </lineage>
</organism>
<keyword id="KW-1185">Reference proteome</keyword>
<name>YHIT_SYNY3</name>
<protein>
    <recommendedName>
        <fullName>Uncharacterized HIT-like protein slr1234</fullName>
    </recommendedName>
</protein>
<gene>
    <name type="ordered locus">slr1234</name>
</gene>
<reference key="1">
    <citation type="journal article" date="1996" name="DNA Res.">
        <title>Sequence analysis of the genome of the unicellular cyanobacterium Synechocystis sp. strain PCC6803. II. Sequence determination of the entire genome and assignment of potential protein-coding regions.</title>
        <authorList>
            <person name="Kaneko T."/>
            <person name="Sato S."/>
            <person name="Kotani H."/>
            <person name="Tanaka A."/>
            <person name="Asamizu E."/>
            <person name="Nakamura Y."/>
            <person name="Miyajima N."/>
            <person name="Hirosawa M."/>
            <person name="Sugiura M."/>
            <person name="Sasamoto S."/>
            <person name="Kimura T."/>
            <person name="Hosouchi T."/>
            <person name="Matsuno A."/>
            <person name="Muraki A."/>
            <person name="Nakazaki N."/>
            <person name="Naruo K."/>
            <person name="Okumura S."/>
            <person name="Shimpo S."/>
            <person name="Takeuchi C."/>
            <person name="Wada T."/>
            <person name="Watanabe A."/>
            <person name="Yamada M."/>
            <person name="Yasuda M."/>
            <person name="Tabata S."/>
        </authorList>
    </citation>
    <scope>NUCLEOTIDE SEQUENCE [LARGE SCALE GENOMIC DNA]</scope>
    <source>
        <strain>ATCC 27184 / PCC 6803 / Kazusa</strain>
    </source>
</reference>